<proteinExistence type="evidence at transcript level"/>
<keyword id="KW-0025">Alternative splicing</keyword>
<keyword id="KW-0040">ANK repeat</keyword>
<keyword id="KW-1185">Reference proteome</keyword>
<keyword id="KW-0677">Repeat</keyword>
<name>POTEG_HUMAN</name>
<feature type="chain" id="PRO_0000066916" description="POTE ankyrin domain family member G">
    <location>
        <begin position="1"/>
        <end position="508"/>
    </location>
</feature>
<feature type="repeat" description="ANK 1">
    <location>
        <begin position="172"/>
        <end position="201"/>
    </location>
</feature>
<feature type="repeat" description="ANK 2">
    <location>
        <begin position="205"/>
        <end position="234"/>
    </location>
</feature>
<feature type="repeat" description="ANK 3">
    <location>
        <begin position="238"/>
        <end position="267"/>
    </location>
</feature>
<feature type="repeat" description="ANK 4">
    <location>
        <begin position="271"/>
        <end position="300"/>
    </location>
</feature>
<feature type="repeat" description="ANK 5">
    <location>
        <begin position="304"/>
        <end position="333"/>
    </location>
</feature>
<feature type="region of interest" description="Disordered" evidence="1">
    <location>
        <begin position="367"/>
        <end position="488"/>
    </location>
</feature>
<feature type="compositionally biased region" description="Polar residues" evidence="1">
    <location>
        <begin position="367"/>
        <end position="376"/>
    </location>
</feature>
<feature type="compositionally biased region" description="Basic and acidic residues" evidence="1">
    <location>
        <begin position="377"/>
        <end position="392"/>
    </location>
</feature>
<feature type="compositionally biased region" description="Basic and acidic residues" evidence="1">
    <location>
        <begin position="406"/>
        <end position="421"/>
    </location>
</feature>
<feature type="compositionally biased region" description="Polar residues" evidence="1">
    <location>
        <begin position="476"/>
        <end position="488"/>
    </location>
</feature>
<feature type="splice variant" id="VSP_040056" description="In isoform 1." evidence="2">
    <original>HGLTPLLLGVHEQKQQVVKFLIKKKANLNALDRYGRTALILAVCCGSASIVSLLLEQNIDVSSQDLSGQTAREYAVSSHHNVICQLLSDYKEKQMLKVSSENSNPEQDLKLTSEEESQRLKGSENSQPEEMSQEPEINKGGDRKVEEEMKKHGSTHMGFPENLPNGATADNGDDGLIPPRKSRTPESQQFPDTENEQYHSDEQNDTQKQLSEEQNTGILQDEILIHEEKQIEVAENE</original>
    <variation>IESHSVSQAGVQWCDHSSLQPRPPEAQMVLQPQPQLFFSFFLFIFIFIFIF</variation>
    <location>
        <begin position="271"/>
        <end position="507"/>
    </location>
</feature>
<feature type="splice variant" id="VSP_040057" description="In isoform 2." evidence="2">
    <original>SDEQNDTQKQLSEEQNTGILQDEILIHEEKQIEVAENEF</original>
    <variation>RDFSGHPNFPTTLPIKQ</variation>
    <location>
        <begin position="470"/>
        <end position="508"/>
    </location>
</feature>
<feature type="sequence conflict" description="In Ref. 1; AAS58870." evidence="3" ref="1">
    <original>P</original>
    <variation>A</variation>
    <location>
        <position position="33"/>
    </location>
</feature>
<feature type="sequence conflict" description="In Ref. 1; AAS58870." evidence="3" ref="1">
    <original>R</original>
    <variation>C</variation>
    <location>
        <position position="66"/>
    </location>
</feature>
<feature type="sequence conflict" description="In Ref. 1; AAS58870/AAS58871." evidence="3" ref="1">
    <original>S</original>
    <variation>G</variation>
    <location>
        <position position="76"/>
    </location>
</feature>
<feature type="sequence conflict" description="In Ref. 1; AAS58870." evidence="3" ref="1">
    <original>I</original>
    <variation>V</variation>
    <location>
        <position position="201"/>
    </location>
</feature>
<feature type="sequence conflict" description="In Ref. 1; AAS58870/AAS58871 and 3; AAI27624." evidence="3" ref="1 3">
    <original>R</original>
    <variation>Q</variation>
    <location>
        <position position="217"/>
    </location>
</feature>
<feature type="sequence conflict" description="In Ref. 1; AAS58871." evidence="3" ref="1">
    <original>A</original>
    <variation>T</variation>
    <location>
        <position position="242"/>
    </location>
</feature>
<feature type="sequence conflict" description="In Ref. 1; AAS58868/AAS58871." evidence="3" ref="1">
    <original>H</original>
    <variation>R</variation>
    <location>
        <position position="349"/>
    </location>
</feature>
<feature type="sequence conflict" description="In Ref. 1; AAS58868." evidence="3" ref="1">
    <original>M</original>
    <variation>I</variation>
    <location>
        <position position="365"/>
    </location>
</feature>
<feature type="sequence conflict" description="In Ref. 3; AAI27624." evidence="3" ref="3">
    <original>L</original>
    <variation>S</variation>
    <location>
        <position position="379"/>
    </location>
</feature>
<feature type="sequence conflict" description="In Ref. 1; AAS58871 and 3; AAI27624." evidence="3" ref="1 3">
    <original>P</original>
    <variation>T</variation>
    <location>
        <position position="434"/>
    </location>
</feature>
<sequence>MVAEAGSMPAASSVKKPFGLRSKMGKWCRHCFPWCRGSGKSNVGTSGDHDDSAMKTLRSKMGKWCRHCFPWCRGSSKSNVGTSGDHDDSAMKTLRSKMGKWCCHCFPCCRGSGKSKVGPWGDYDDSAFMEPRYHVRREDLDKLHRAAWWGKVPRKDLIVMLKDTDMNKKDKQKRTALHLASANGNSEVVKLLLDRRCQLNILDNKKRTALTKAVQCREDECALMLLEHGTDPNIPDEYGNTALHYAIYNEDKLMAKALLLYGADIESKNKHGLTPLLLGVHEQKQQVVKFLIKKKANLNALDRYGRTALILAVCCGSASIVSLLLEQNIDVSSQDLSGQTAREYAVSSHHNVICQLLSDYKEKQMLKVSSENSNPEQDLKLTSEEESQRLKGSENSQPEEMSQEPEINKGGDRKVEEEMKKHGSTHMGFPENLPNGATADNGDDGLIPPRKSRTPESQQFPDTENEQYHSDEQNDTQKQLSEEQNTGILQDEILIHEEKQIEVAENEF</sequence>
<reference key="1">
    <citation type="journal article" date="2004" name="Gene">
        <title>Five POTE paralogs and their splice variants are expressed in human prostate and encode proteins of different lengths.</title>
        <authorList>
            <person name="Bera T.K."/>
            <person name="Huynh N."/>
            <person name="Maeda H."/>
            <person name="Sathyanarayana B.K."/>
            <person name="Lee B."/>
            <person name="Pastan I."/>
        </authorList>
    </citation>
    <scope>NUCLEOTIDE SEQUENCE [MRNA] (ISOFORMS 1; 2 AND 3)</scope>
    <source>
        <tissue>Prostate</tissue>
    </source>
</reference>
<reference key="2">
    <citation type="journal article" date="2003" name="Nature">
        <title>The DNA sequence and analysis of human chromosome 14.</title>
        <authorList>
            <person name="Heilig R."/>
            <person name="Eckenberg R."/>
            <person name="Petit J.-L."/>
            <person name="Fonknechten N."/>
            <person name="Da Silva C."/>
            <person name="Cattolico L."/>
            <person name="Levy M."/>
            <person name="Barbe V."/>
            <person name="De Berardinis V."/>
            <person name="Ureta-Vidal A."/>
            <person name="Pelletier E."/>
            <person name="Vico V."/>
            <person name="Anthouard V."/>
            <person name="Rowen L."/>
            <person name="Madan A."/>
            <person name="Qin S."/>
            <person name="Sun H."/>
            <person name="Du H."/>
            <person name="Pepin K."/>
            <person name="Artiguenave F."/>
            <person name="Robert C."/>
            <person name="Cruaud C."/>
            <person name="Bruels T."/>
            <person name="Jaillon O."/>
            <person name="Friedlander L."/>
            <person name="Samson G."/>
            <person name="Brottier P."/>
            <person name="Cure S."/>
            <person name="Segurens B."/>
            <person name="Aniere F."/>
            <person name="Samain S."/>
            <person name="Crespeau H."/>
            <person name="Abbasi N."/>
            <person name="Aiach N."/>
            <person name="Boscus D."/>
            <person name="Dickhoff R."/>
            <person name="Dors M."/>
            <person name="Dubois I."/>
            <person name="Friedman C."/>
            <person name="Gouyvenoux M."/>
            <person name="James R."/>
            <person name="Madan A."/>
            <person name="Mairey-Estrada B."/>
            <person name="Mangenot S."/>
            <person name="Martins N."/>
            <person name="Menard M."/>
            <person name="Oztas S."/>
            <person name="Ratcliffe A."/>
            <person name="Shaffer T."/>
            <person name="Trask B."/>
            <person name="Vacherie B."/>
            <person name="Bellemere C."/>
            <person name="Belser C."/>
            <person name="Besnard-Gonnet M."/>
            <person name="Bartol-Mavel D."/>
            <person name="Boutard M."/>
            <person name="Briez-Silla S."/>
            <person name="Combette S."/>
            <person name="Dufosse-Laurent V."/>
            <person name="Ferron C."/>
            <person name="Lechaplais C."/>
            <person name="Louesse C."/>
            <person name="Muselet D."/>
            <person name="Magdelenat G."/>
            <person name="Pateau E."/>
            <person name="Petit E."/>
            <person name="Sirvain-Trukniewicz P."/>
            <person name="Trybou A."/>
            <person name="Vega-Czarny N."/>
            <person name="Bataille E."/>
            <person name="Bluet E."/>
            <person name="Bordelais I."/>
            <person name="Dubois M."/>
            <person name="Dumont C."/>
            <person name="Guerin T."/>
            <person name="Haffray S."/>
            <person name="Hammadi R."/>
            <person name="Muanga J."/>
            <person name="Pellouin V."/>
            <person name="Robert D."/>
            <person name="Wunderle E."/>
            <person name="Gauguet G."/>
            <person name="Roy A."/>
            <person name="Sainte-Marthe L."/>
            <person name="Verdier J."/>
            <person name="Verdier-Discala C."/>
            <person name="Hillier L.W."/>
            <person name="Fulton L."/>
            <person name="McPherson J."/>
            <person name="Matsuda F."/>
            <person name="Wilson R."/>
            <person name="Scarpelli C."/>
            <person name="Gyapay G."/>
            <person name="Wincker P."/>
            <person name="Saurin W."/>
            <person name="Quetier F."/>
            <person name="Waterston R."/>
            <person name="Hood L."/>
            <person name="Weissenbach J."/>
        </authorList>
    </citation>
    <scope>NUCLEOTIDE SEQUENCE [LARGE SCALE GENOMIC DNA]</scope>
</reference>
<reference key="3">
    <citation type="journal article" date="2004" name="Genome Res.">
        <title>The status, quality, and expansion of the NIH full-length cDNA project: the Mammalian Gene Collection (MGC).</title>
        <authorList>
            <consortium name="The MGC Project Team"/>
        </authorList>
    </citation>
    <scope>NUCLEOTIDE SEQUENCE [LARGE SCALE MRNA] OF 1-458 (ISOFORM 3)</scope>
</reference>
<comment type="alternative products">
    <event type="alternative splicing"/>
    <isoform>
        <id>Q6S5H5-3</id>
        <name>3</name>
        <name>POTE14A</name>
        <sequence type="displayed"/>
    </isoform>
    <isoform>
        <id>Q6S5H5-2</id>
        <name>2</name>
        <name>POTE14C</name>
        <sequence type="described" ref="VSP_040057"/>
    </isoform>
    <isoform>
        <id>Q6S5H5-4</id>
        <name>1</name>
        <name>POTE14B</name>
        <sequence type="described" ref="VSP_040056"/>
    </isoform>
</comment>
<comment type="miscellaneous">
    <molecule>Isoform 2</molecule>
    <text evidence="3">May be produced at very low levels due to a premature stop codon in the mRNA, leading to nonsense-mediated mRNA decay.</text>
</comment>
<comment type="miscellaneous">
    <molecule>Isoform 1</molecule>
    <text evidence="3">May be produced at very low levels due to a premature stop codon in the mRNA, leading to nonsense-mediated mRNA decay.</text>
</comment>
<comment type="similarity">
    <text evidence="3">Belongs to the POTE family.</text>
</comment>
<comment type="sequence caution" evidence="3">
    <conflict type="frameshift">
        <sequence resource="EMBL-CDS" id="AAS58870"/>
    </conflict>
</comment>
<evidence type="ECO:0000256" key="1">
    <source>
        <dbReference type="SAM" id="MobiDB-lite"/>
    </source>
</evidence>
<evidence type="ECO:0000303" key="2">
    <source>
    </source>
</evidence>
<evidence type="ECO:0000305" key="3"/>
<accession>Q6S5H5</accession>
<accession>A1L153</accession>
<accession>A6NMI9</accession>
<accession>Q6S5H6</accession>
<accession>Q6S8J2</accession>
<organism>
    <name type="scientific">Homo sapiens</name>
    <name type="common">Human</name>
    <dbReference type="NCBI Taxonomy" id="9606"/>
    <lineage>
        <taxon>Eukaryota</taxon>
        <taxon>Metazoa</taxon>
        <taxon>Chordata</taxon>
        <taxon>Craniata</taxon>
        <taxon>Vertebrata</taxon>
        <taxon>Euteleostomi</taxon>
        <taxon>Mammalia</taxon>
        <taxon>Eutheria</taxon>
        <taxon>Euarchontoglires</taxon>
        <taxon>Primates</taxon>
        <taxon>Haplorrhini</taxon>
        <taxon>Catarrhini</taxon>
        <taxon>Hominidae</taxon>
        <taxon>Homo</taxon>
    </lineage>
</organism>
<gene>
    <name type="primary">POTEG</name>
    <name type="synonym">A26C2</name>
    <name type="synonym">POTE14</name>
</gene>
<dbReference type="EMBL" id="AY462874">
    <property type="protein sequence ID" value="AAS58868.1"/>
    <property type="molecule type" value="mRNA"/>
</dbReference>
<dbReference type="EMBL" id="AY465171">
    <property type="protein sequence ID" value="AAS58870.1"/>
    <property type="status" value="ALT_FRAME"/>
    <property type="molecule type" value="mRNA"/>
</dbReference>
<dbReference type="EMBL" id="AY465172">
    <property type="protein sequence ID" value="AAS58871.1"/>
    <property type="molecule type" value="mRNA"/>
</dbReference>
<dbReference type="EMBL" id="AL512624">
    <property type="status" value="NOT_ANNOTATED_CDS"/>
    <property type="molecule type" value="Genomic_DNA"/>
</dbReference>
<dbReference type="EMBL" id="BC127623">
    <property type="protein sequence ID" value="AAI27624.1"/>
    <property type="molecule type" value="mRNA"/>
</dbReference>
<dbReference type="CCDS" id="CCDS73610.1">
    <molecule id="Q6S5H5-3"/>
</dbReference>
<dbReference type="RefSeq" id="NP_001005356.1">
    <molecule id="Q6S5H5-3"/>
    <property type="nucleotide sequence ID" value="NM_001005356.3"/>
</dbReference>
<dbReference type="SMR" id="Q6S5H5"/>
<dbReference type="BioGRID" id="135711">
    <property type="interactions" value="11"/>
</dbReference>
<dbReference type="FunCoup" id="Q6S5H5">
    <property type="interactions" value="3"/>
</dbReference>
<dbReference type="IntAct" id="Q6S5H5">
    <property type="interactions" value="10"/>
</dbReference>
<dbReference type="STRING" id="9606.ENSP00000450853"/>
<dbReference type="iPTMnet" id="Q6S5H5"/>
<dbReference type="PhosphoSitePlus" id="Q6S5H5"/>
<dbReference type="BioMuta" id="POTEG"/>
<dbReference type="DMDM" id="313104320"/>
<dbReference type="jPOST" id="Q6S5H5"/>
<dbReference type="MassIVE" id="Q6S5H5"/>
<dbReference type="PaxDb" id="9606-ENSP00000450853"/>
<dbReference type="ProteomicsDB" id="67339">
    <molecule id="Q6S5H5-3"/>
</dbReference>
<dbReference type="ProteomicsDB" id="67340">
    <molecule id="Q6S5H5-2"/>
</dbReference>
<dbReference type="Antibodypedia" id="58505">
    <property type="antibodies" value="148 antibodies from 17 providers"/>
</dbReference>
<dbReference type="DNASU" id="404785"/>
<dbReference type="Ensembl" id="ENST00000547722.1">
    <molecule id="Q6S5H5-4"/>
    <property type="protein sequence ID" value="ENSP00000450807.1"/>
    <property type="gene ID" value="ENSG00000187537.13"/>
</dbReference>
<dbReference type="Ensembl" id="ENST00000547848.5">
    <molecule id="Q6S5H5-3"/>
    <property type="protein sequence ID" value="ENSP00000450853.2"/>
    <property type="gene ID" value="ENSG00000187537.13"/>
</dbReference>
<dbReference type="Ensembl" id="ENST00000622767.4">
    <molecule id="Q6S5H5-2"/>
    <property type="protein sequence ID" value="ENSP00000482662.1"/>
    <property type="gene ID" value="ENSG00000187537.13"/>
</dbReference>
<dbReference type="GeneID" id="404785"/>
<dbReference type="KEGG" id="hsa:404785"/>
<dbReference type="MANE-Select" id="ENST00000547848.5">
    <property type="protein sequence ID" value="ENSP00000450853.2"/>
    <property type="RefSeq nucleotide sequence ID" value="NM_001005356.3"/>
    <property type="RefSeq protein sequence ID" value="NP_001005356.1"/>
</dbReference>
<dbReference type="UCSC" id="uc001vuz.3">
    <molecule id="Q6S5H5-3"/>
    <property type="organism name" value="human"/>
</dbReference>
<dbReference type="AGR" id="HGNC:33896"/>
<dbReference type="CTD" id="404785"/>
<dbReference type="DisGeNET" id="404785"/>
<dbReference type="GeneCards" id="POTEG"/>
<dbReference type="HGNC" id="HGNC:33896">
    <property type="gene designation" value="POTEG"/>
</dbReference>
<dbReference type="HPA" id="ENSG00000187537">
    <property type="expression patterns" value="Tissue enhanced (prostate)"/>
</dbReference>
<dbReference type="MIM" id="608916">
    <property type="type" value="gene"/>
</dbReference>
<dbReference type="neXtProt" id="NX_Q6S5H5"/>
<dbReference type="OpenTargets" id="ENSG00000187537"/>
<dbReference type="PharmGKB" id="PA164724853"/>
<dbReference type="VEuPathDB" id="HostDB:ENSG00000187537"/>
<dbReference type="eggNOG" id="KOG0676">
    <property type="taxonomic scope" value="Eukaryota"/>
</dbReference>
<dbReference type="GeneTree" id="ENSGT00940000163068"/>
<dbReference type="HOGENOM" id="CLU_000134_9_2_1"/>
<dbReference type="InParanoid" id="Q6S5H5"/>
<dbReference type="OMA" id="CCESASI"/>
<dbReference type="OrthoDB" id="9629280at2759"/>
<dbReference type="PAN-GO" id="Q6S5H5">
    <property type="GO annotations" value="0 GO annotations based on evolutionary models"/>
</dbReference>
<dbReference type="PhylomeDB" id="Q6S5H5"/>
<dbReference type="TreeFam" id="TF337879"/>
<dbReference type="PathwayCommons" id="Q6S5H5"/>
<dbReference type="BioGRID-ORCS" id="404785">
    <property type="hits" value="501 hits in 1017 CRISPR screens"/>
</dbReference>
<dbReference type="ChiTaRS" id="POTEG">
    <property type="organism name" value="human"/>
</dbReference>
<dbReference type="GenomeRNAi" id="404785"/>
<dbReference type="Pharos" id="Q6S5H5">
    <property type="development level" value="Tbio"/>
</dbReference>
<dbReference type="PRO" id="PR:Q6S5H5"/>
<dbReference type="Proteomes" id="UP000005640">
    <property type="component" value="Chromosome 14"/>
</dbReference>
<dbReference type="RNAct" id="Q6S5H5">
    <property type="molecule type" value="protein"/>
</dbReference>
<dbReference type="Bgee" id="ENSG00000187537">
    <property type="expression patterns" value="Expressed in male germ line stem cell (sensu Vertebrata) in testis and 6 other cell types or tissues"/>
</dbReference>
<dbReference type="Gene3D" id="1.25.40.20">
    <property type="entry name" value="Ankyrin repeat-containing domain"/>
    <property type="match status" value="1"/>
</dbReference>
<dbReference type="InterPro" id="IPR050657">
    <property type="entry name" value="Ankyrin_repeat_domain"/>
</dbReference>
<dbReference type="InterPro" id="IPR002110">
    <property type="entry name" value="Ankyrin_rpt"/>
</dbReference>
<dbReference type="InterPro" id="IPR036770">
    <property type="entry name" value="Ankyrin_rpt-contain_sf"/>
</dbReference>
<dbReference type="PANTHER" id="PTHR24147">
    <property type="entry name" value="ANKYRIN REPEAT DOMAIN 36-RELATED"/>
    <property type="match status" value="1"/>
</dbReference>
<dbReference type="PANTHER" id="PTHR24147:SF66">
    <property type="entry name" value="POTE ANKYRIN DOMAIN FAMILY MEMBER D"/>
    <property type="match status" value="1"/>
</dbReference>
<dbReference type="Pfam" id="PF12796">
    <property type="entry name" value="Ank_2"/>
    <property type="match status" value="2"/>
</dbReference>
<dbReference type="PRINTS" id="PR01415">
    <property type="entry name" value="ANKYRIN"/>
</dbReference>
<dbReference type="SMART" id="SM00248">
    <property type="entry name" value="ANK"/>
    <property type="match status" value="6"/>
</dbReference>
<dbReference type="SUPFAM" id="SSF48403">
    <property type="entry name" value="Ankyrin repeat"/>
    <property type="match status" value="1"/>
</dbReference>
<dbReference type="PROSITE" id="PS50297">
    <property type="entry name" value="ANK_REP_REGION"/>
    <property type="match status" value="1"/>
</dbReference>
<dbReference type="PROSITE" id="PS50088">
    <property type="entry name" value="ANK_REPEAT"/>
    <property type="match status" value="4"/>
</dbReference>
<protein>
    <recommendedName>
        <fullName>POTE ankyrin domain family member G</fullName>
    </recommendedName>
    <alternativeName>
        <fullName>ANKRD26-like family C member 2</fullName>
    </alternativeName>
    <alternativeName>
        <fullName>Prostate, ovary, testis-expressed protein on chromosome 14</fullName>
        <shortName>POTE-14</shortName>
    </alternativeName>
</protein>